<sequence length="446" mass="49628">MTEQKRKLEKLTGVKGMNDILPQDAGLWEFFEATVKSLLRAYGYQNIRTPIVEHTQLFTRGIGEVTDIVEKEMYSFVDALNGENLTLRPENTAAVVRAAIEHNMLYDGPKRLWYLGPMFRHERPQRGRYRQFHQVGVEALGFAGPDADAEIIMMCQRLWDDLGLTGIKLEINSLGLAEERAAHRVELIKYLEQHVDKLDDDAQRRLYTNPLRVLDTKNPALQEIVRNAPQLIDFLGDVSRAHFDGLQRLLKANNLPFTINPRLVRGLDYYNLTVFEWVTDKLGAQGTVAAGGRYDPLIEQLGGKPTAACGWAMGVERILELLKEEHLVPEQEGVDVYVVHQGDAAREQAFIVAERLRDTGLDVILHCSADGAGASFKSQMKRADASGAAFAVIFGEDEVANGTVSVKPLRGTGAEGEKNVQQSVPVESLTEFLINAMVATAEDGDD</sequence>
<dbReference type="EC" id="6.1.1.21" evidence="1"/>
<dbReference type="EMBL" id="BX571965">
    <property type="protein sequence ID" value="CAH35515.1"/>
    <property type="molecule type" value="Genomic_DNA"/>
</dbReference>
<dbReference type="RefSeq" id="WP_004521334.1">
    <property type="nucleotide sequence ID" value="NZ_CP009538.1"/>
</dbReference>
<dbReference type="RefSeq" id="YP_108134.1">
    <property type="nucleotide sequence ID" value="NC_006350.1"/>
</dbReference>
<dbReference type="SMR" id="Q63UT2"/>
<dbReference type="STRING" id="272560.BPSL1514"/>
<dbReference type="KEGG" id="bps:BPSL1514"/>
<dbReference type="PATRIC" id="fig|272560.51.peg.3551"/>
<dbReference type="eggNOG" id="COG0124">
    <property type="taxonomic scope" value="Bacteria"/>
</dbReference>
<dbReference type="Proteomes" id="UP000000605">
    <property type="component" value="Chromosome 1"/>
</dbReference>
<dbReference type="GO" id="GO:0005737">
    <property type="term" value="C:cytoplasm"/>
    <property type="evidence" value="ECO:0007669"/>
    <property type="project" value="UniProtKB-SubCell"/>
</dbReference>
<dbReference type="GO" id="GO:0005524">
    <property type="term" value="F:ATP binding"/>
    <property type="evidence" value="ECO:0007669"/>
    <property type="project" value="UniProtKB-UniRule"/>
</dbReference>
<dbReference type="GO" id="GO:0004821">
    <property type="term" value="F:histidine-tRNA ligase activity"/>
    <property type="evidence" value="ECO:0007669"/>
    <property type="project" value="UniProtKB-UniRule"/>
</dbReference>
<dbReference type="GO" id="GO:0006427">
    <property type="term" value="P:histidyl-tRNA aminoacylation"/>
    <property type="evidence" value="ECO:0007669"/>
    <property type="project" value="UniProtKB-UniRule"/>
</dbReference>
<dbReference type="CDD" id="cd00773">
    <property type="entry name" value="HisRS-like_core"/>
    <property type="match status" value="1"/>
</dbReference>
<dbReference type="CDD" id="cd00859">
    <property type="entry name" value="HisRS_anticodon"/>
    <property type="match status" value="1"/>
</dbReference>
<dbReference type="FunFam" id="3.30.930.10:FF:000005">
    <property type="entry name" value="Histidine--tRNA ligase"/>
    <property type="match status" value="1"/>
</dbReference>
<dbReference type="Gene3D" id="3.40.50.800">
    <property type="entry name" value="Anticodon-binding domain"/>
    <property type="match status" value="1"/>
</dbReference>
<dbReference type="Gene3D" id="3.30.930.10">
    <property type="entry name" value="Bira Bifunctional Protein, Domain 2"/>
    <property type="match status" value="1"/>
</dbReference>
<dbReference type="HAMAP" id="MF_00127">
    <property type="entry name" value="His_tRNA_synth"/>
    <property type="match status" value="1"/>
</dbReference>
<dbReference type="InterPro" id="IPR006195">
    <property type="entry name" value="aa-tRNA-synth_II"/>
</dbReference>
<dbReference type="InterPro" id="IPR045864">
    <property type="entry name" value="aa-tRNA-synth_II/BPL/LPL"/>
</dbReference>
<dbReference type="InterPro" id="IPR004154">
    <property type="entry name" value="Anticodon-bd"/>
</dbReference>
<dbReference type="InterPro" id="IPR036621">
    <property type="entry name" value="Anticodon-bd_dom_sf"/>
</dbReference>
<dbReference type="InterPro" id="IPR015807">
    <property type="entry name" value="His-tRNA-ligase"/>
</dbReference>
<dbReference type="InterPro" id="IPR041715">
    <property type="entry name" value="HisRS-like_core"/>
</dbReference>
<dbReference type="InterPro" id="IPR004516">
    <property type="entry name" value="HisRS/HisZ"/>
</dbReference>
<dbReference type="InterPro" id="IPR033656">
    <property type="entry name" value="HisRS_anticodon"/>
</dbReference>
<dbReference type="NCBIfam" id="TIGR00442">
    <property type="entry name" value="hisS"/>
    <property type="match status" value="1"/>
</dbReference>
<dbReference type="PANTHER" id="PTHR43707:SF1">
    <property type="entry name" value="HISTIDINE--TRNA LIGASE, MITOCHONDRIAL-RELATED"/>
    <property type="match status" value="1"/>
</dbReference>
<dbReference type="PANTHER" id="PTHR43707">
    <property type="entry name" value="HISTIDYL-TRNA SYNTHETASE"/>
    <property type="match status" value="1"/>
</dbReference>
<dbReference type="Pfam" id="PF03129">
    <property type="entry name" value="HGTP_anticodon"/>
    <property type="match status" value="1"/>
</dbReference>
<dbReference type="Pfam" id="PF13393">
    <property type="entry name" value="tRNA-synt_His"/>
    <property type="match status" value="1"/>
</dbReference>
<dbReference type="PIRSF" id="PIRSF001549">
    <property type="entry name" value="His-tRNA_synth"/>
    <property type="match status" value="1"/>
</dbReference>
<dbReference type="SUPFAM" id="SSF52954">
    <property type="entry name" value="Class II aaRS ABD-related"/>
    <property type="match status" value="1"/>
</dbReference>
<dbReference type="SUPFAM" id="SSF55681">
    <property type="entry name" value="Class II aaRS and biotin synthetases"/>
    <property type="match status" value="1"/>
</dbReference>
<dbReference type="PROSITE" id="PS50862">
    <property type="entry name" value="AA_TRNA_LIGASE_II"/>
    <property type="match status" value="1"/>
</dbReference>
<evidence type="ECO:0000255" key="1">
    <source>
        <dbReference type="HAMAP-Rule" id="MF_00127"/>
    </source>
</evidence>
<name>SYH_BURPS</name>
<accession>Q63UT2</accession>
<proteinExistence type="inferred from homology"/>
<feature type="chain" id="PRO_0000136130" description="Histidine--tRNA ligase">
    <location>
        <begin position="1"/>
        <end position="446"/>
    </location>
</feature>
<comment type="catalytic activity">
    <reaction evidence="1">
        <text>tRNA(His) + L-histidine + ATP = L-histidyl-tRNA(His) + AMP + diphosphate + H(+)</text>
        <dbReference type="Rhea" id="RHEA:17313"/>
        <dbReference type="Rhea" id="RHEA-COMP:9665"/>
        <dbReference type="Rhea" id="RHEA-COMP:9689"/>
        <dbReference type="ChEBI" id="CHEBI:15378"/>
        <dbReference type="ChEBI" id="CHEBI:30616"/>
        <dbReference type="ChEBI" id="CHEBI:33019"/>
        <dbReference type="ChEBI" id="CHEBI:57595"/>
        <dbReference type="ChEBI" id="CHEBI:78442"/>
        <dbReference type="ChEBI" id="CHEBI:78527"/>
        <dbReference type="ChEBI" id="CHEBI:456215"/>
        <dbReference type="EC" id="6.1.1.21"/>
    </reaction>
</comment>
<comment type="subunit">
    <text evidence="1">Homodimer.</text>
</comment>
<comment type="subcellular location">
    <subcellularLocation>
        <location evidence="1">Cytoplasm</location>
    </subcellularLocation>
</comment>
<comment type="similarity">
    <text evidence="1">Belongs to the class-II aminoacyl-tRNA synthetase family.</text>
</comment>
<protein>
    <recommendedName>
        <fullName evidence="1">Histidine--tRNA ligase</fullName>
        <ecNumber evidence="1">6.1.1.21</ecNumber>
    </recommendedName>
    <alternativeName>
        <fullName evidence="1">Histidyl-tRNA synthetase</fullName>
        <shortName evidence="1">HisRS</shortName>
    </alternativeName>
</protein>
<keyword id="KW-0030">Aminoacyl-tRNA synthetase</keyword>
<keyword id="KW-0067">ATP-binding</keyword>
<keyword id="KW-0963">Cytoplasm</keyword>
<keyword id="KW-0436">Ligase</keyword>
<keyword id="KW-0547">Nucleotide-binding</keyword>
<keyword id="KW-0648">Protein biosynthesis</keyword>
<keyword id="KW-1185">Reference proteome</keyword>
<gene>
    <name evidence="1" type="primary">hisS</name>
    <name type="ordered locus">BPSL1514</name>
</gene>
<reference key="1">
    <citation type="journal article" date="2004" name="Proc. Natl. Acad. Sci. U.S.A.">
        <title>Genomic plasticity of the causative agent of melioidosis, Burkholderia pseudomallei.</title>
        <authorList>
            <person name="Holden M.T.G."/>
            <person name="Titball R.W."/>
            <person name="Peacock S.J."/>
            <person name="Cerdeno-Tarraga A.-M."/>
            <person name="Atkins T."/>
            <person name="Crossman L.C."/>
            <person name="Pitt T."/>
            <person name="Churcher C."/>
            <person name="Mungall K.L."/>
            <person name="Bentley S.D."/>
            <person name="Sebaihia M."/>
            <person name="Thomson N.R."/>
            <person name="Bason N."/>
            <person name="Beacham I.R."/>
            <person name="Brooks K."/>
            <person name="Brown K.A."/>
            <person name="Brown N.F."/>
            <person name="Challis G.L."/>
            <person name="Cherevach I."/>
            <person name="Chillingworth T."/>
            <person name="Cronin A."/>
            <person name="Crossett B."/>
            <person name="Davis P."/>
            <person name="DeShazer D."/>
            <person name="Feltwell T."/>
            <person name="Fraser A."/>
            <person name="Hance Z."/>
            <person name="Hauser H."/>
            <person name="Holroyd S."/>
            <person name="Jagels K."/>
            <person name="Keith K.E."/>
            <person name="Maddison M."/>
            <person name="Moule S."/>
            <person name="Price C."/>
            <person name="Quail M.A."/>
            <person name="Rabbinowitsch E."/>
            <person name="Rutherford K."/>
            <person name="Sanders M."/>
            <person name="Simmonds M."/>
            <person name="Songsivilai S."/>
            <person name="Stevens K."/>
            <person name="Tumapa S."/>
            <person name="Vesaratchavest M."/>
            <person name="Whitehead S."/>
            <person name="Yeats C."/>
            <person name="Barrell B.G."/>
            <person name="Oyston P.C.F."/>
            <person name="Parkhill J."/>
        </authorList>
    </citation>
    <scope>NUCLEOTIDE SEQUENCE [LARGE SCALE GENOMIC DNA]</scope>
    <source>
        <strain>K96243</strain>
    </source>
</reference>
<organism>
    <name type="scientific">Burkholderia pseudomallei (strain K96243)</name>
    <dbReference type="NCBI Taxonomy" id="272560"/>
    <lineage>
        <taxon>Bacteria</taxon>
        <taxon>Pseudomonadati</taxon>
        <taxon>Pseudomonadota</taxon>
        <taxon>Betaproteobacteria</taxon>
        <taxon>Burkholderiales</taxon>
        <taxon>Burkholderiaceae</taxon>
        <taxon>Burkholderia</taxon>
        <taxon>pseudomallei group</taxon>
    </lineage>
</organism>